<comment type="function">
    <text evidence="1">NDH-1 shuttles electrons from an unknown electron donor, via FMN and iron-sulfur (Fe-S) centers, to quinones in the respiratory and/or the photosynthetic chain. The immediate electron acceptor for the enzyme in this species is believed to be plastoquinone. Couples the redox reaction to proton translocation, and thus conserves the redox energy in a proton gradient. Cyanobacterial NDH-1 also plays a role in inorganic carbon-concentration.</text>
</comment>
<comment type="catalytic activity">
    <reaction evidence="1">
        <text>a plastoquinone + NADH + (n+1) H(+)(in) = a plastoquinol + NAD(+) + n H(+)(out)</text>
        <dbReference type="Rhea" id="RHEA:42608"/>
        <dbReference type="Rhea" id="RHEA-COMP:9561"/>
        <dbReference type="Rhea" id="RHEA-COMP:9562"/>
        <dbReference type="ChEBI" id="CHEBI:15378"/>
        <dbReference type="ChEBI" id="CHEBI:17757"/>
        <dbReference type="ChEBI" id="CHEBI:57540"/>
        <dbReference type="ChEBI" id="CHEBI:57945"/>
        <dbReference type="ChEBI" id="CHEBI:62192"/>
    </reaction>
</comment>
<comment type="catalytic activity">
    <reaction evidence="1">
        <text>a plastoquinone + NADPH + (n+1) H(+)(in) = a plastoquinol + NADP(+) + n H(+)(out)</text>
        <dbReference type="Rhea" id="RHEA:42612"/>
        <dbReference type="Rhea" id="RHEA-COMP:9561"/>
        <dbReference type="Rhea" id="RHEA-COMP:9562"/>
        <dbReference type="ChEBI" id="CHEBI:15378"/>
        <dbReference type="ChEBI" id="CHEBI:17757"/>
        <dbReference type="ChEBI" id="CHEBI:57783"/>
        <dbReference type="ChEBI" id="CHEBI:58349"/>
        <dbReference type="ChEBI" id="CHEBI:62192"/>
    </reaction>
</comment>
<comment type="subunit">
    <text evidence="1">NDH-1 can be composed of about 15 different subunits; different subcomplexes with different compositions have been identified which probably have different functions.</text>
</comment>
<comment type="subcellular location">
    <subcellularLocation>
        <location evidence="1">Cell inner membrane</location>
        <topology evidence="1">Multi-pass membrane protein</topology>
    </subcellularLocation>
</comment>
<comment type="similarity">
    <text evidence="1">Belongs to the complex I subunit 3 family.</text>
</comment>
<gene>
    <name evidence="1" type="primary">ndhC</name>
    <name type="ordered locus">glr0748</name>
</gene>
<evidence type="ECO:0000255" key="1">
    <source>
        <dbReference type="HAMAP-Rule" id="MF_01394"/>
    </source>
</evidence>
<keyword id="KW-0997">Cell inner membrane</keyword>
<keyword id="KW-1003">Cell membrane</keyword>
<keyword id="KW-0472">Membrane</keyword>
<keyword id="KW-0520">NAD</keyword>
<keyword id="KW-0521">NADP</keyword>
<keyword id="KW-0618">Plastoquinone</keyword>
<keyword id="KW-0874">Quinone</keyword>
<keyword id="KW-1185">Reference proteome</keyword>
<keyword id="KW-1278">Translocase</keyword>
<keyword id="KW-0812">Transmembrane</keyword>
<keyword id="KW-1133">Transmembrane helix</keyword>
<keyword id="KW-0813">Transport</keyword>
<accession>Q7NML7</accession>
<name>NU3C_GLOVI</name>
<protein>
    <recommendedName>
        <fullName evidence="1">NAD(P)H-quinone oxidoreductase subunit 3</fullName>
        <ecNumber evidence="1">7.1.1.-</ecNumber>
    </recommendedName>
    <alternativeName>
        <fullName evidence="1">NAD(P)H dehydrogenase subunit 3</fullName>
    </alternativeName>
    <alternativeName>
        <fullName evidence="1">NADH-plastoquinone oxidoreductase subunit 3</fullName>
    </alternativeName>
    <alternativeName>
        <fullName evidence="1">NDH-1 subunit 3</fullName>
        <shortName evidence="1">NDH-C</shortName>
    </alternativeName>
</protein>
<organism>
    <name type="scientific">Gloeobacter violaceus (strain ATCC 29082 / PCC 7421)</name>
    <dbReference type="NCBI Taxonomy" id="251221"/>
    <lineage>
        <taxon>Bacteria</taxon>
        <taxon>Bacillati</taxon>
        <taxon>Cyanobacteriota</taxon>
        <taxon>Cyanophyceae</taxon>
        <taxon>Gloeobacterales</taxon>
        <taxon>Gloeobacteraceae</taxon>
        <taxon>Gloeobacter</taxon>
    </lineage>
</organism>
<proteinExistence type="inferred from homology"/>
<reference key="1">
    <citation type="journal article" date="2003" name="DNA Res.">
        <title>Complete genome structure of Gloeobacter violaceus PCC 7421, a cyanobacterium that lacks thylakoids.</title>
        <authorList>
            <person name="Nakamura Y."/>
            <person name="Kaneko T."/>
            <person name="Sato S."/>
            <person name="Mimuro M."/>
            <person name="Miyashita H."/>
            <person name="Tsuchiya T."/>
            <person name="Sasamoto S."/>
            <person name="Watanabe A."/>
            <person name="Kawashima K."/>
            <person name="Kishida Y."/>
            <person name="Kiyokawa C."/>
            <person name="Kohara M."/>
            <person name="Matsumoto M."/>
            <person name="Matsuno A."/>
            <person name="Nakazaki N."/>
            <person name="Shimpo S."/>
            <person name="Takeuchi C."/>
            <person name="Yamada M."/>
            <person name="Tabata S."/>
        </authorList>
    </citation>
    <scope>NUCLEOTIDE SEQUENCE [LARGE SCALE GENOMIC DNA]</scope>
    <source>
        <strain>ATCC 29082 / PCC 7421</strain>
    </source>
</reference>
<dbReference type="EC" id="7.1.1.-" evidence="1"/>
<dbReference type="EMBL" id="BA000045">
    <property type="protein sequence ID" value="BAC88689.1"/>
    <property type="molecule type" value="Genomic_DNA"/>
</dbReference>
<dbReference type="RefSeq" id="NP_923694.1">
    <property type="nucleotide sequence ID" value="NC_005125.1"/>
</dbReference>
<dbReference type="RefSeq" id="WP_011140750.1">
    <property type="nucleotide sequence ID" value="NC_005125.1"/>
</dbReference>
<dbReference type="SMR" id="Q7NML7"/>
<dbReference type="FunCoup" id="Q7NML7">
    <property type="interactions" value="63"/>
</dbReference>
<dbReference type="STRING" id="251221.gene:10758225"/>
<dbReference type="EnsemblBacteria" id="BAC88689">
    <property type="protein sequence ID" value="BAC88689"/>
    <property type="gene ID" value="BAC88689"/>
</dbReference>
<dbReference type="KEGG" id="gvi:glr0748"/>
<dbReference type="PATRIC" id="fig|251221.4.peg.761"/>
<dbReference type="eggNOG" id="COG0838">
    <property type="taxonomic scope" value="Bacteria"/>
</dbReference>
<dbReference type="HOGENOM" id="CLU_119549_1_1_3"/>
<dbReference type="InParanoid" id="Q7NML7"/>
<dbReference type="OrthoDB" id="9791970at2"/>
<dbReference type="PhylomeDB" id="Q7NML7"/>
<dbReference type="Proteomes" id="UP000000557">
    <property type="component" value="Chromosome"/>
</dbReference>
<dbReference type="GO" id="GO:0030964">
    <property type="term" value="C:NADH dehydrogenase complex"/>
    <property type="evidence" value="ECO:0000318"/>
    <property type="project" value="GO_Central"/>
</dbReference>
<dbReference type="GO" id="GO:0005886">
    <property type="term" value="C:plasma membrane"/>
    <property type="evidence" value="ECO:0007669"/>
    <property type="project" value="UniProtKB-SubCell"/>
</dbReference>
<dbReference type="GO" id="GO:0008137">
    <property type="term" value="F:NADH dehydrogenase (ubiquinone) activity"/>
    <property type="evidence" value="ECO:0000318"/>
    <property type="project" value="GO_Central"/>
</dbReference>
<dbReference type="GO" id="GO:0048038">
    <property type="term" value="F:quinone binding"/>
    <property type="evidence" value="ECO:0007669"/>
    <property type="project" value="UniProtKB-KW"/>
</dbReference>
<dbReference type="GO" id="GO:0019684">
    <property type="term" value="P:photosynthesis, light reaction"/>
    <property type="evidence" value="ECO:0007669"/>
    <property type="project" value="UniProtKB-UniRule"/>
</dbReference>
<dbReference type="FunFam" id="1.20.58.1610:FF:000001">
    <property type="entry name" value="NAD(P)H-quinone oxidoreductase subunit 3, chloroplastic"/>
    <property type="match status" value="1"/>
</dbReference>
<dbReference type="Gene3D" id="1.20.58.1610">
    <property type="entry name" value="NADH:ubiquinone/plastoquinone oxidoreductase, chain 3"/>
    <property type="match status" value="1"/>
</dbReference>
<dbReference type="HAMAP" id="MF_01394">
    <property type="entry name" value="NDH1_NuoA"/>
    <property type="match status" value="1"/>
</dbReference>
<dbReference type="InterPro" id="IPR023043">
    <property type="entry name" value="NAD(P)H_OxRDtase_bac/plastid"/>
</dbReference>
<dbReference type="InterPro" id="IPR000440">
    <property type="entry name" value="NADH_UbQ/plastoQ_OxRdtase_su3"/>
</dbReference>
<dbReference type="InterPro" id="IPR038430">
    <property type="entry name" value="NDAH_ubi_oxred_su3_sf"/>
</dbReference>
<dbReference type="PANTHER" id="PTHR11058">
    <property type="entry name" value="NADH-UBIQUINONE OXIDOREDUCTASE CHAIN 3"/>
    <property type="match status" value="1"/>
</dbReference>
<dbReference type="PANTHER" id="PTHR11058:SF9">
    <property type="entry name" value="NADH-UBIQUINONE OXIDOREDUCTASE CHAIN 3"/>
    <property type="match status" value="1"/>
</dbReference>
<dbReference type="Pfam" id="PF00507">
    <property type="entry name" value="Oxidored_q4"/>
    <property type="match status" value="1"/>
</dbReference>
<sequence length="120" mass="13583">MFVLSGYDALLIFLLLSALVPVLALTISYLIRPKGSGAFRTTTYESGVDPRGDSWIQFNIRYYMFALVFVVFDVETVFLYPWAVAFNQLGLLAFIEALIFIAILVVALVYAWRKGALEWT</sequence>
<feature type="chain" id="PRO_0000362697" description="NAD(P)H-quinone oxidoreductase subunit 3">
    <location>
        <begin position="1"/>
        <end position="120"/>
    </location>
</feature>
<feature type="transmembrane region" description="Helical" evidence="1">
    <location>
        <begin position="11"/>
        <end position="31"/>
    </location>
</feature>
<feature type="transmembrane region" description="Helical" evidence="1">
    <location>
        <begin position="64"/>
        <end position="84"/>
    </location>
</feature>
<feature type="transmembrane region" description="Helical" evidence="1">
    <location>
        <begin position="89"/>
        <end position="109"/>
    </location>
</feature>